<evidence type="ECO:0000255" key="1">
    <source>
        <dbReference type="HAMAP-Rule" id="MF_01351"/>
    </source>
</evidence>
<evidence type="ECO:0000256" key="2">
    <source>
        <dbReference type="SAM" id="MobiDB-lite"/>
    </source>
</evidence>
<accession>Q1CRZ3</accession>
<sequence>MAKQEYKQLPKRAEVHSATEQFKDTIKTSLGLDLFKGLGLTIKEFFSPSVTIHYPMEQLPLSPRYRAVHHLQRLLDSGSERCIGCGLCEKICTSNCIRIITHKGEDNRKKIDSYTINLGRCIYCGLCAEVCPELAIVMGNRFENASTQRSQYGSKSEFLTNEQDAKNCSHAEFLGFGAVSPNYNERMQATPLDYVQEPSKEESKEETPTNPESNKGDENV</sequence>
<dbReference type="EC" id="7.1.1.-" evidence="1"/>
<dbReference type="EMBL" id="CP000241">
    <property type="protein sequence ID" value="ABF85279.1"/>
    <property type="molecule type" value="Genomic_DNA"/>
</dbReference>
<dbReference type="RefSeq" id="WP_001118528.1">
    <property type="nucleotide sequence ID" value="NC_008086.1"/>
</dbReference>
<dbReference type="SMR" id="Q1CRZ3"/>
<dbReference type="KEGG" id="hpa:HPAG1_1212"/>
<dbReference type="HOGENOM" id="CLU_067218_4_1_7"/>
<dbReference type="GO" id="GO:0005886">
    <property type="term" value="C:plasma membrane"/>
    <property type="evidence" value="ECO:0007669"/>
    <property type="project" value="UniProtKB-SubCell"/>
</dbReference>
<dbReference type="GO" id="GO:0051539">
    <property type="term" value="F:4 iron, 4 sulfur cluster binding"/>
    <property type="evidence" value="ECO:0007669"/>
    <property type="project" value="UniProtKB-KW"/>
</dbReference>
<dbReference type="GO" id="GO:0005506">
    <property type="term" value="F:iron ion binding"/>
    <property type="evidence" value="ECO:0007669"/>
    <property type="project" value="UniProtKB-UniRule"/>
</dbReference>
<dbReference type="GO" id="GO:0050136">
    <property type="term" value="F:NADH:ubiquinone reductase (non-electrogenic) activity"/>
    <property type="evidence" value="ECO:0007669"/>
    <property type="project" value="UniProtKB-UniRule"/>
</dbReference>
<dbReference type="GO" id="GO:0048038">
    <property type="term" value="F:quinone binding"/>
    <property type="evidence" value="ECO:0007669"/>
    <property type="project" value="UniProtKB-KW"/>
</dbReference>
<dbReference type="GO" id="GO:0009060">
    <property type="term" value="P:aerobic respiration"/>
    <property type="evidence" value="ECO:0007669"/>
    <property type="project" value="TreeGrafter"/>
</dbReference>
<dbReference type="FunFam" id="3.30.70.3270:FF:000011">
    <property type="entry name" value="NADH-quinone oxidoreductase subunit I"/>
    <property type="match status" value="1"/>
</dbReference>
<dbReference type="Gene3D" id="3.30.70.3270">
    <property type="match status" value="1"/>
</dbReference>
<dbReference type="HAMAP" id="MF_01351">
    <property type="entry name" value="NDH1_NuoI"/>
    <property type="match status" value="1"/>
</dbReference>
<dbReference type="InterPro" id="IPR017896">
    <property type="entry name" value="4Fe4S_Fe-S-bd"/>
</dbReference>
<dbReference type="InterPro" id="IPR017900">
    <property type="entry name" value="4Fe4S_Fe_S_CS"/>
</dbReference>
<dbReference type="InterPro" id="IPR010226">
    <property type="entry name" value="NADH_quinone_OxRdtase_chainI"/>
</dbReference>
<dbReference type="NCBIfam" id="TIGR01971">
    <property type="entry name" value="NuoI"/>
    <property type="match status" value="1"/>
</dbReference>
<dbReference type="NCBIfam" id="NF004542">
    <property type="entry name" value="PRK05888.2-3"/>
    <property type="match status" value="1"/>
</dbReference>
<dbReference type="NCBIfam" id="NF004544">
    <property type="entry name" value="PRK05888.2-6"/>
    <property type="match status" value="1"/>
</dbReference>
<dbReference type="PANTHER" id="PTHR10849:SF20">
    <property type="entry name" value="NADH DEHYDROGENASE [UBIQUINONE] IRON-SULFUR PROTEIN 8, MITOCHONDRIAL"/>
    <property type="match status" value="1"/>
</dbReference>
<dbReference type="PANTHER" id="PTHR10849">
    <property type="entry name" value="NADH DEHYDROGENASE UBIQUINONE IRON-SULFUR PROTEIN 8, MITOCHONDRIAL"/>
    <property type="match status" value="1"/>
</dbReference>
<dbReference type="Pfam" id="PF12838">
    <property type="entry name" value="Fer4_7"/>
    <property type="match status" value="1"/>
</dbReference>
<dbReference type="SUPFAM" id="SSF54862">
    <property type="entry name" value="4Fe-4S ferredoxins"/>
    <property type="match status" value="1"/>
</dbReference>
<dbReference type="PROSITE" id="PS00198">
    <property type="entry name" value="4FE4S_FER_1"/>
    <property type="match status" value="1"/>
</dbReference>
<dbReference type="PROSITE" id="PS51379">
    <property type="entry name" value="4FE4S_FER_2"/>
    <property type="match status" value="2"/>
</dbReference>
<protein>
    <recommendedName>
        <fullName evidence="1">NADH-quinone oxidoreductase subunit I</fullName>
        <ecNumber evidence="1">7.1.1.-</ecNumber>
    </recommendedName>
    <alternativeName>
        <fullName evidence="1">NADH dehydrogenase I subunit I</fullName>
    </alternativeName>
    <alternativeName>
        <fullName evidence="1">NDH-1 subunit I</fullName>
    </alternativeName>
</protein>
<gene>
    <name evidence="1" type="primary">nuoI</name>
    <name type="ordered locus">HPAG1_1212</name>
</gene>
<keyword id="KW-0004">4Fe-4S</keyword>
<keyword id="KW-0997">Cell inner membrane</keyword>
<keyword id="KW-1003">Cell membrane</keyword>
<keyword id="KW-0408">Iron</keyword>
<keyword id="KW-0411">Iron-sulfur</keyword>
<keyword id="KW-0472">Membrane</keyword>
<keyword id="KW-0479">Metal-binding</keyword>
<keyword id="KW-0520">NAD</keyword>
<keyword id="KW-0874">Quinone</keyword>
<keyword id="KW-0677">Repeat</keyword>
<keyword id="KW-1278">Translocase</keyword>
<keyword id="KW-0830">Ubiquinone</keyword>
<organism>
    <name type="scientific">Helicobacter pylori (strain HPAG1)</name>
    <dbReference type="NCBI Taxonomy" id="357544"/>
    <lineage>
        <taxon>Bacteria</taxon>
        <taxon>Pseudomonadati</taxon>
        <taxon>Campylobacterota</taxon>
        <taxon>Epsilonproteobacteria</taxon>
        <taxon>Campylobacterales</taxon>
        <taxon>Helicobacteraceae</taxon>
        <taxon>Helicobacter</taxon>
    </lineage>
</organism>
<comment type="function">
    <text evidence="1">NDH-1 shuttles electrons from NADH, via FMN and iron-sulfur (Fe-S) centers, to quinones in the respiratory chain. The immediate electron acceptor for the enzyme in this species is believed to be ubiquinone. Couples the redox reaction to proton translocation (for every two electrons transferred, four hydrogen ions are translocated across the cytoplasmic membrane), and thus conserves the redox energy in a proton gradient.</text>
</comment>
<comment type="catalytic activity">
    <reaction evidence="1">
        <text>a quinone + NADH + 5 H(+)(in) = a quinol + NAD(+) + 4 H(+)(out)</text>
        <dbReference type="Rhea" id="RHEA:57888"/>
        <dbReference type="ChEBI" id="CHEBI:15378"/>
        <dbReference type="ChEBI" id="CHEBI:24646"/>
        <dbReference type="ChEBI" id="CHEBI:57540"/>
        <dbReference type="ChEBI" id="CHEBI:57945"/>
        <dbReference type="ChEBI" id="CHEBI:132124"/>
    </reaction>
</comment>
<comment type="cofactor">
    <cofactor evidence="1">
        <name>[4Fe-4S] cluster</name>
        <dbReference type="ChEBI" id="CHEBI:49883"/>
    </cofactor>
    <text evidence="1">Binds 2 [4Fe-4S] clusters per subunit.</text>
</comment>
<comment type="subunit">
    <text evidence="1">NDH-1 is composed of 14 different subunits. Subunits NuoA, H, J, K, L, M, N constitute the membrane sector of the complex.</text>
</comment>
<comment type="subcellular location">
    <subcellularLocation>
        <location evidence="1">Cell inner membrane</location>
        <topology evidence="1">Peripheral membrane protein</topology>
    </subcellularLocation>
</comment>
<comment type="similarity">
    <text evidence="1">Belongs to the complex I 23 kDa subunit family.</text>
</comment>
<name>NUOI_HELPH</name>
<reference key="1">
    <citation type="journal article" date="2006" name="Proc. Natl. Acad. Sci. U.S.A.">
        <title>The complete genome sequence of a chronic atrophic gastritis Helicobacter pylori strain: evolution during disease progression.</title>
        <authorList>
            <person name="Oh J.D."/>
            <person name="Kling-Baeckhed H."/>
            <person name="Giannakis M."/>
            <person name="Xu J."/>
            <person name="Fulton R.S."/>
            <person name="Fulton L.A."/>
            <person name="Cordum H.S."/>
            <person name="Wang C."/>
            <person name="Elliott G."/>
            <person name="Edwards J."/>
            <person name="Mardis E.R."/>
            <person name="Engstrand L.G."/>
            <person name="Gordon J.I."/>
        </authorList>
    </citation>
    <scope>NUCLEOTIDE SEQUENCE [LARGE SCALE GENOMIC DNA]</scope>
    <source>
        <strain>HPAG1</strain>
    </source>
</reference>
<feature type="chain" id="PRO_0000250909" description="NADH-quinone oxidoreductase subunit I">
    <location>
        <begin position="1"/>
        <end position="220"/>
    </location>
</feature>
<feature type="domain" description="4Fe-4S ferredoxin-type 1" evidence="1">
    <location>
        <begin position="71"/>
        <end position="102"/>
    </location>
</feature>
<feature type="domain" description="4Fe-4S ferredoxin-type 2" evidence="1">
    <location>
        <begin position="112"/>
        <end position="141"/>
    </location>
</feature>
<feature type="region of interest" description="Disordered" evidence="2">
    <location>
        <begin position="187"/>
        <end position="220"/>
    </location>
</feature>
<feature type="compositionally biased region" description="Basic and acidic residues" evidence="2">
    <location>
        <begin position="198"/>
        <end position="207"/>
    </location>
</feature>
<feature type="binding site" evidence="1">
    <location>
        <position position="82"/>
    </location>
    <ligand>
        <name>[4Fe-4S] cluster</name>
        <dbReference type="ChEBI" id="CHEBI:49883"/>
        <label>1</label>
    </ligand>
</feature>
<feature type="binding site" evidence="1">
    <location>
        <position position="85"/>
    </location>
    <ligand>
        <name>[4Fe-4S] cluster</name>
        <dbReference type="ChEBI" id="CHEBI:49883"/>
        <label>1</label>
    </ligand>
</feature>
<feature type="binding site" evidence="1">
    <location>
        <position position="88"/>
    </location>
    <ligand>
        <name>[4Fe-4S] cluster</name>
        <dbReference type="ChEBI" id="CHEBI:49883"/>
        <label>1</label>
    </ligand>
</feature>
<feature type="binding site" evidence="1">
    <location>
        <position position="92"/>
    </location>
    <ligand>
        <name>[4Fe-4S] cluster</name>
        <dbReference type="ChEBI" id="CHEBI:49883"/>
        <label>2</label>
    </ligand>
</feature>
<feature type="binding site" evidence="1">
    <location>
        <position position="121"/>
    </location>
    <ligand>
        <name>[4Fe-4S] cluster</name>
        <dbReference type="ChEBI" id="CHEBI:49883"/>
        <label>2</label>
    </ligand>
</feature>
<feature type="binding site" evidence="1">
    <location>
        <position position="124"/>
    </location>
    <ligand>
        <name>[4Fe-4S] cluster</name>
        <dbReference type="ChEBI" id="CHEBI:49883"/>
        <label>2</label>
    </ligand>
</feature>
<feature type="binding site" evidence="1">
    <location>
        <position position="127"/>
    </location>
    <ligand>
        <name>[4Fe-4S] cluster</name>
        <dbReference type="ChEBI" id="CHEBI:49883"/>
        <label>2</label>
    </ligand>
</feature>
<feature type="binding site" evidence="1">
    <location>
        <position position="131"/>
    </location>
    <ligand>
        <name>[4Fe-4S] cluster</name>
        <dbReference type="ChEBI" id="CHEBI:49883"/>
        <label>1</label>
    </ligand>
</feature>
<proteinExistence type="inferred from homology"/>